<comment type="function">
    <text evidence="4">Possible role in transport between endoplasmic reticulum and Golgi.</text>
</comment>
<comment type="subunit">
    <text evidence="4">Interacts with YIPF5.</text>
</comment>
<comment type="interaction">
    <interactant intactId="EBI-2799703">
        <id>O95070</id>
    </interactant>
    <interactant intactId="EBI-3936819">
        <id>Q6Q788</id>
        <label>APOA5</label>
    </interactant>
    <organismsDiffer>false</organismsDiffer>
    <experiments>3</experiments>
</comment>
<comment type="interaction">
    <interactant intactId="EBI-2799703">
        <id>O95070</id>
    </interactant>
    <interactant intactId="EBI-13059134">
        <id>Q13520</id>
        <label>AQP6</label>
    </interactant>
    <organismsDiffer>false</organismsDiffer>
    <experiments>3</experiments>
</comment>
<comment type="interaction">
    <interactant intactId="EBI-2799703">
        <id>O95070</id>
    </interactant>
    <interactant intactId="EBI-6308763">
        <id>Q9NQ11</id>
        <label>ATP13A2</label>
    </interactant>
    <organismsDiffer>false</organismsDiffer>
    <experiments>2</experiments>
</comment>
<comment type="interaction">
    <interactant intactId="EBI-2799703">
        <id>O95070</id>
    </interactant>
    <interactant intactId="EBI-752094">
        <id>Q12982</id>
        <label>BNIP2</label>
    </interactant>
    <organismsDiffer>false</organismsDiffer>
    <experiments>3</experiments>
</comment>
<comment type="interaction">
    <interactant intactId="EBI-2799703">
        <id>O95070</id>
    </interactant>
    <interactant intactId="EBI-12003442">
        <id>Q8WVX3-2</id>
        <label>C4orf3</label>
    </interactant>
    <organismsDiffer>false</organismsDiffer>
    <experiments>3</experiments>
</comment>
<comment type="interaction">
    <interactant intactId="EBI-2799703">
        <id>O95070</id>
    </interactant>
    <interactant intactId="EBI-718729">
        <id>P55212</id>
        <label>CASP6</label>
    </interactant>
    <organismsDiffer>false</organismsDiffer>
    <experiments>3</experiments>
</comment>
<comment type="interaction">
    <interactant intactId="EBI-2799703">
        <id>O95070</id>
    </interactant>
    <interactant intactId="EBI-7797864">
        <id>P11912</id>
        <label>CD79A</label>
    </interactant>
    <organismsDiffer>false</organismsDiffer>
    <experiments>3</experiments>
</comment>
<comment type="interaction">
    <interactant intactId="EBI-2799703">
        <id>O95070</id>
    </interactant>
    <interactant intactId="EBI-1057080">
        <id>Q96G23</id>
        <label>CERS2</label>
    </interactant>
    <organismsDiffer>false</organismsDiffer>
    <experiments>3</experiments>
</comment>
<comment type="interaction">
    <interactant intactId="EBI-2799703">
        <id>O95070</id>
    </interactant>
    <interactant intactId="EBI-958255">
        <id>Q96F85</id>
        <label>CNRIP1</label>
    </interactant>
    <organismsDiffer>false</organismsDiffer>
    <experiments>3</experiments>
</comment>
<comment type="interaction">
    <interactant intactId="EBI-2799703">
        <id>O95070</id>
    </interactant>
    <interactant intactId="EBI-7163527">
        <id>Q15828</id>
        <label>CST6</label>
    </interactant>
    <organismsDiffer>false</organismsDiffer>
    <experiments>3</experiments>
</comment>
<comment type="interaction">
    <interactant intactId="EBI-2799703">
        <id>O95070</id>
    </interactant>
    <interactant intactId="EBI-3915253">
        <id>Q15125</id>
        <label>EBP</label>
    </interactant>
    <organismsDiffer>false</organismsDiffer>
    <experiments>3</experiments>
</comment>
<comment type="interaction">
    <interactant intactId="EBI-2799703">
        <id>O95070</id>
    </interactant>
    <interactant intactId="EBI-18535450">
        <id>Q9GZR5</id>
        <label>ELOVL4</label>
    </interactant>
    <organismsDiffer>false</organismsDiffer>
    <experiments>3</experiments>
</comment>
<comment type="interaction">
    <interactant intactId="EBI-2799703">
        <id>O95070</id>
    </interactant>
    <interactant intactId="EBI-781551">
        <id>Q9Y282</id>
        <label>ERGIC3</label>
    </interactant>
    <organismsDiffer>false</organismsDiffer>
    <experiments>3</experiments>
</comment>
<comment type="interaction">
    <interactant intactId="EBI-2799703">
        <id>O95070</id>
    </interactant>
    <interactant intactId="EBI-18938272">
        <id>Q96KR6</id>
        <label>FAM210B</label>
    </interactant>
    <organismsDiffer>false</organismsDiffer>
    <experiments>3</experiments>
</comment>
<comment type="interaction">
    <interactant intactId="EBI-2799703">
        <id>O95070</id>
    </interactant>
    <interactant intactId="EBI-2513774">
        <id>O95363</id>
        <label>FARS2</label>
    </interactant>
    <organismsDiffer>false</organismsDiffer>
    <experiments>3</experiments>
</comment>
<comment type="interaction">
    <interactant intactId="EBI-2799703">
        <id>O95070</id>
    </interactant>
    <interactant intactId="EBI-2833872">
        <id>O15552</id>
        <label>FFAR2</label>
    </interactant>
    <organismsDiffer>false</organismsDiffer>
    <experiments>3</experiments>
</comment>
<comment type="interaction">
    <interactant intactId="EBI-2799703">
        <id>O95070</id>
    </interactant>
    <interactant intactId="EBI-11745923">
        <id>O60861-1</id>
        <label>GAS7</label>
    </interactant>
    <organismsDiffer>false</organismsDiffer>
    <experiments>3</experiments>
</comment>
<comment type="interaction">
    <interactant intactId="EBI-2799703">
        <id>O95070</id>
    </interactant>
    <interactant intactId="EBI-17458373">
        <id>P48165</id>
        <label>GJA8</label>
    </interactant>
    <organismsDiffer>false</organismsDiffer>
    <experiments>3</experiments>
</comment>
<comment type="interaction">
    <interactant intactId="EBI-2799703">
        <id>O95070</id>
    </interactant>
    <interactant intactId="EBI-15639515">
        <id>O15354</id>
        <label>GPR37</label>
    </interactant>
    <organismsDiffer>false</organismsDiffer>
    <experiments>2</experiments>
</comment>
<comment type="interaction">
    <interactant intactId="EBI-2799703">
        <id>O95070</id>
    </interactant>
    <interactant intactId="EBI-18076404">
        <id>O15529</id>
        <label>GPR42</label>
    </interactant>
    <organismsDiffer>false</organismsDiffer>
    <experiments>3</experiments>
</comment>
<comment type="interaction">
    <interactant intactId="EBI-2799703">
        <id>O95070</id>
    </interactant>
    <interactant intactId="EBI-11721746">
        <id>Q8TED1</id>
        <label>GPX8</label>
    </interactant>
    <organismsDiffer>false</organismsDiffer>
    <experiments>3</experiments>
</comment>
<comment type="interaction">
    <interactant intactId="EBI-2799703">
        <id>O95070</id>
    </interactant>
    <interactant intactId="EBI-747754">
        <id>P28799</id>
        <label>GRN</label>
    </interactant>
    <organismsDiffer>false</organismsDiffer>
    <experiments>3</experiments>
</comment>
<comment type="interaction">
    <interactant intactId="EBI-2799703">
        <id>O95070</id>
    </interactant>
    <interactant intactId="EBI-1052304">
        <id>Q8NBQ5</id>
        <label>HSD17B11</label>
    </interactant>
    <organismsDiffer>false</organismsDiffer>
    <experiments>3</experiments>
</comment>
<comment type="interaction">
    <interactant intactId="EBI-2799703">
        <id>O95070</id>
    </interactant>
    <interactant intactId="EBI-466029">
        <id>P42858</id>
        <label>HTT</label>
    </interactant>
    <organismsDiffer>false</organismsDiffer>
    <experiments>12</experiments>
</comment>
<comment type="interaction">
    <interactant intactId="EBI-2799703">
        <id>O95070</id>
    </interactant>
    <interactant intactId="EBI-12205593">
        <id>Q8TAC2</id>
        <label>JOSD2</label>
    </interactant>
    <organismsDiffer>false</organismsDiffer>
    <experiments>3</experiments>
</comment>
<comment type="interaction">
    <interactant intactId="EBI-2799703">
        <id>O95070</id>
    </interactant>
    <interactant intactId="EBI-21591415">
        <id>P13473-2</id>
        <label>LAMP2</label>
    </interactant>
    <organismsDiffer>false</organismsDiffer>
    <experiments>3</experiments>
</comment>
<comment type="interaction">
    <interactant intactId="EBI-2799703">
        <id>O95070</id>
    </interactant>
    <interactant intactId="EBI-11024283">
        <id>Q9C0E8-2</id>
        <label>LNPK</label>
    </interactant>
    <organismsDiffer>false</organismsDiffer>
    <experiments>3</experiments>
</comment>
<comment type="interaction">
    <interactant intactId="EBI-2799703">
        <id>O95070</id>
    </interactant>
    <interactant intactId="EBI-3930711">
        <id>P48449</id>
        <label>LSS</label>
    </interactant>
    <organismsDiffer>false</organismsDiffer>
    <experiments>3</experiments>
</comment>
<comment type="interaction">
    <interactant intactId="EBI-2799703">
        <id>O95070</id>
    </interactant>
    <interactant intactId="EBI-2341610">
        <id>Q9NX47</id>
        <label>MARCHF5</label>
    </interactant>
    <organismsDiffer>false</organismsDiffer>
    <experiments>3</experiments>
</comment>
<comment type="interaction">
    <interactant intactId="EBI-2799703">
        <id>O95070</id>
    </interactant>
    <interactant intactId="EBI-724754">
        <id>O14880</id>
        <label>MGST3</label>
    </interactant>
    <organismsDiffer>false</organismsDiffer>
    <experiments>3</experiments>
</comment>
<comment type="interaction">
    <interactant intactId="EBI-2799703">
        <id>O95070</id>
    </interactant>
    <interactant intactId="EBI-11988931">
        <id>Q96C03-3</id>
        <label>MIEF2</label>
    </interactant>
    <organismsDiffer>false</organismsDiffer>
    <experiments>3</experiments>
</comment>
<comment type="interaction">
    <interactant intactId="EBI-2799703">
        <id>O95070</id>
    </interactant>
    <interactant intactId="EBI-1384215">
        <id>Q03111</id>
        <label>MLLT1</label>
    </interactant>
    <organismsDiffer>false</organismsDiffer>
    <experiments>3</experiments>
</comment>
<comment type="interaction">
    <interactant intactId="EBI-2799703">
        <id>O95070</id>
    </interactant>
    <interactant intactId="EBI-6163737">
        <id>Q8N4V1</id>
        <label>MMGT1</label>
    </interactant>
    <organismsDiffer>false</organismsDiffer>
    <experiments>3</experiments>
</comment>
<comment type="interaction">
    <interactant intactId="EBI-2799703">
        <id>O95070</id>
    </interactant>
    <interactant intactId="EBI-949102">
        <id>Q15800</id>
        <label>MSMO1</label>
    </interactant>
    <organismsDiffer>false</organismsDiffer>
    <experiments>3</experiments>
</comment>
<comment type="interaction">
    <interactant intactId="EBI-2799703">
        <id>O95070</id>
    </interactant>
    <interactant intactId="EBI-7825321">
        <id>Q96E29</id>
        <label>MTERF3</label>
    </interactant>
    <organismsDiffer>false</organismsDiffer>
    <experiments>3</experiments>
</comment>
<comment type="interaction">
    <interactant intactId="EBI-2799703">
        <id>O95070</id>
    </interactant>
    <interactant intactId="EBI-709754">
        <id>Q9HB07</id>
        <label>MYG1</label>
    </interactant>
    <organismsDiffer>false</organismsDiffer>
    <experiments>3</experiments>
</comment>
<comment type="interaction">
    <interactant intactId="EBI-2799703">
        <id>O95070</id>
    </interactant>
    <interactant intactId="EBI-11978907">
        <id>Q9ULP0-2</id>
        <label>NDRG4</label>
    </interactant>
    <organismsDiffer>false</organismsDiffer>
    <experiments>3</experiments>
</comment>
<comment type="interaction">
    <interactant intactId="EBI-2799703">
        <id>O95070</id>
    </interactant>
    <interactant intactId="EBI-742388">
        <id>Q9H8W4</id>
        <label>PLEKHF2</label>
    </interactant>
    <organismsDiffer>false</organismsDiffer>
    <experiments>3</experiments>
</comment>
<comment type="interaction">
    <interactant intactId="EBI-2799703">
        <id>O95070</id>
    </interactant>
    <interactant intactId="EBI-5544229">
        <id>P30405</id>
        <label>PPIF</label>
    </interactant>
    <organismsDiffer>false</organismsDiffer>
    <experiments>3</experiments>
</comment>
<comment type="interaction">
    <interactant intactId="EBI-2799703">
        <id>O95070</id>
    </interactant>
    <interactant intactId="EBI-11161398">
        <id>O14684</id>
        <label>PTGES</label>
    </interactant>
    <organismsDiffer>false</organismsDiffer>
    <experiments>3</experiments>
</comment>
<comment type="interaction">
    <interactant intactId="EBI-2799703">
        <id>O95070</id>
    </interactant>
    <interactant intactId="EBI-742898">
        <id>P43378</id>
        <label>PTPN9</label>
    </interactant>
    <organismsDiffer>false</organismsDiffer>
    <experiments>3</experiments>
</comment>
<comment type="interaction">
    <interactant intactId="EBI-2799703">
        <id>O95070</id>
    </interactant>
    <interactant intactId="EBI-286642">
        <id>P62826</id>
        <label>RAN</label>
    </interactant>
    <organismsDiffer>false</organismsDiffer>
    <experiments>3</experiments>
</comment>
<comment type="interaction">
    <interactant intactId="EBI-2799703">
        <id>O95070</id>
    </interactant>
    <interactant intactId="EBI-3232108">
        <id>Q8N0V3</id>
        <label>RBFA</label>
    </interactant>
    <organismsDiffer>false</organismsDiffer>
    <experiments>3</experiments>
</comment>
<comment type="interaction">
    <interactant intactId="EBI-2799703">
        <id>O95070</id>
    </interactant>
    <interactant intactId="EBI-11337973">
        <id>Q9BRK0</id>
        <label>REEP2</label>
    </interactant>
    <organismsDiffer>false</organismsDiffer>
    <experiments>3</experiments>
</comment>
<comment type="interaction">
    <interactant intactId="EBI-2799703">
        <id>O95070</id>
    </interactant>
    <interactant intactId="EBI-7545592">
        <id>Q9H6H4</id>
        <label>REEP4</label>
    </interactant>
    <organismsDiffer>false</organismsDiffer>
    <experiments>3</experiments>
</comment>
<comment type="interaction">
    <interactant intactId="EBI-2799703">
        <id>O95070</id>
    </interactant>
    <interactant intactId="EBI-12375429">
        <id>Q7Z5B4-5</id>
        <label>RIC3</label>
    </interactant>
    <organismsDiffer>false</organismsDiffer>
    <experiments>3</experiments>
</comment>
<comment type="interaction">
    <interactant intactId="EBI-2799703">
        <id>O95070</id>
    </interactant>
    <interactant intactId="EBI-2340657">
        <id>P50876</id>
        <label>RNF144A</label>
    </interactant>
    <organismsDiffer>false</organismsDiffer>
    <experiments>3</experiments>
</comment>
<comment type="interaction">
    <interactant intactId="EBI-2799703">
        <id>O95070</id>
    </interactant>
    <interactant intactId="EBI-17247926">
        <id>Q9NY72</id>
        <label>SCN3B</label>
    </interactant>
    <organismsDiffer>false</organismsDiffer>
    <experiments>3</experiments>
</comment>
<comment type="interaction">
    <interactant intactId="EBI-2799703">
        <id>O95070</id>
    </interactant>
    <interactant intactId="EBI-23705473">
        <id>Q8IWT1</id>
        <label>SCN4B</label>
    </interactant>
    <organismsDiffer>false</organismsDiffer>
    <experiments>3</experiments>
</comment>
<comment type="interaction">
    <interactant intactId="EBI-2799703">
        <id>O95070</id>
    </interactant>
    <interactant intactId="EBI-727004">
        <id>O00560</id>
        <label>SDCBP</label>
    </interactant>
    <organismsDiffer>false</organismsDiffer>
    <experiments>3</experiments>
</comment>
<comment type="interaction">
    <interactant intactId="EBI-2799703">
        <id>O95070</id>
    </interactant>
    <interactant intactId="EBI-1767971">
        <id>Q9Y6Y8</id>
        <label>SEC23IP</label>
    </interactant>
    <organismsDiffer>false</organismsDiffer>
    <experiments>3</experiments>
</comment>
<comment type="interaction">
    <interactant intactId="EBI-2799703">
        <id>O95070</id>
    </interactant>
    <interactant intactId="EBI-2623095">
        <id>Q9Y371</id>
        <label>SH3GLB1</label>
    </interactant>
    <organismsDiffer>false</organismsDiffer>
    <experiments>3</experiments>
</comment>
<comment type="interaction">
    <interactant intactId="EBI-2799703">
        <id>O95070</id>
    </interactant>
    <interactant intactId="EBI-3923031">
        <id>Q14973</id>
        <label>SLC10A1</label>
    </interactant>
    <organismsDiffer>false</organismsDiffer>
    <experiments>3</experiments>
</comment>
<comment type="interaction">
    <interactant intactId="EBI-2799703">
        <id>O95070</id>
    </interactant>
    <interactant intactId="EBI-17295964">
        <id>Q9NQQ7-3</id>
        <label>SLC35C2</label>
    </interactant>
    <organismsDiffer>false</organismsDiffer>
    <experiments>3</experiments>
</comment>
<comment type="interaction">
    <interactant intactId="EBI-2799703">
        <id>O95070</id>
    </interactant>
    <interactant intactId="EBI-10329478">
        <id>Q9Y5X0</id>
        <label>SNX10</label>
    </interactant>
    <organismsDiffer>false</organismsDiffer>
    <experiments>3</experiments>
</comment>
<comment type="interaction">
    <interactant intactId="EBI-2799703">
        <id>O95070</id>
    </interactant>
    <interactant intactId="EBI-10329449">
        <id>Q9Y5W9</id>
        <label>SNX11</label>
    </interactant>
    <organismsDiffer>false</organismsDiffer>
    <experiments>3</experiments>
</comment>
<comment type="interaction">
    <interactant intactId="EBI-2799703">
        <id>O95070</id>
    </interactant>
    <interactant intactId="EBI-1046690">
        <id>O60749</id>
        <label>SNX2</label>
    </interactant>
    <organismsDiffer>false</organismsDiffer>
    <experiments>3</experiments>
</comment>
<comment type="interaction">
    <interactant intactId="EBI-2799703">
        <id>O95070</id>
    </interactant>
    <interactant intactId="EBI-14291493">
        <id>Q9HCH5-13</id>
        <label>SYTL2</label>
    </interactant>
    <organismsDiffer>false</organismsDiffer>
    <experiments>3</experiments>
</comment>
<comment type="interaction">
    <interactant intactId="EBI-2799703">
        <id>O95070</id>
    </interactant>
    <interactant intactId="EBI-12243980">
        <id>Q8TDW5-2</id>
        <label>SYTL5</label>
    </interactant>
    <organismsDiffer>false</organismsDiffer>
    <experiments>3</experiments>
</comment>
<comment type="interaction">
    <interactant intactId="EBI-2799703">
        <id>O95070</id>
    </interactant>
    <interactant intactId="EBI-6268651">
        <id>Q9NPL8</id>
        <label>TIMMDC1</label>
    </interactant>
    <organismsDiffer>false</organismsDiffer>
    <experiments>3</experiments>
</comment>
<comment type="interaction">
    <interactant intactId="EBI-2799703">
        <id>O95070</id>
    </interactant>
    <interactant intactId="EBI-7238458">
        <id>Q8IV31</id>
        <label>TMEM139</label>
    </interactant>
    <organismsDiffer>false</organismsDiffer>
    <experiments>3</experiments>
</comment>
<comment type="interaction">
    <interactant intactId="EBI-2799703">
        <id>O95070</id>
    </interactant>
    <interactant intactId="EBI-8638294">
        <id>Q9NUH8</id>
        <label>TMEM14B</label>
    </interactant>
    <organismsDiffer>false</organismsDiffer>
    <experiments>3</experiments>
</comment>
<comment type="interaction">
    <interactant intactId="EBI-2799703">
        <id>O95070</id>
    </interactant>
    <interactant intactId="EBI-11343485">
        <id>Q86X19</id>
        <label>TMEM17</label>
    </interactant>
    <organismsDiffer>false</organismsDiffer>
    <experiments>4</experiments>
</comment>
<comment type="interaction">
    <interactant intactId="EBI-2799703">
        <id>O95070</id>
    </interactant>
    <interactant intactId="EBI-18398510">
        <id>P0DP42</id>
        <label>TMEM225B</label>
    </interactant>
    <organismsDiffer>false</organismsDiffer>
    <experiments>3</experiments>
</comment>
<comment type="interaction">
    <interactant intactId="EBI-2799703">
        <id>O95070</id>
    </interactant>
    <interactant intactId="EBI-10314986">
        <id>Q9NWD8</id>
        <label>TMEM248</label>
    </interactant>
    <organismsDiffer>false</organismsDiffer>
    <experiments>3</experiments>
</comment>
<comment type="interaction">
    <interactant intactId="EBI-2799703">
        <id>O95070</id>
    </interactant>
    <interactant intactId="EBI-6447886">
        <id>Q9Y320</id>
        <label>TMX2</label>
    </interactant>
    <organismsDiffer>false</organismsDiffer>
    <experiments>3</experiments>
</comment>
<comment type="interaction">
    <interactant intactId="EBI-2799703">
        <id>O95070</id>
    </interactant>
    <interactant intactId="EBI-1059156">
        <id>Q9P0L0</id>
        <label>VAPA</label>
    </interactant>
    <organismsDiffer>false</organismsDiffer>
    <experiments>3</experiments>
</comment>
<comment type="interaction">
    <interactant intactId="EBI-2799703">
        <id>O95070</id>
    </interactant>
    <interactant intactId="EBI-1188298">
        <id>O95292</id>
        <label>VAPB</label>
    </interactant>
    <organismsDiffer>false</organismsDiffer>
    <experiments>9</experiments>
</comment>
<comment type="interaction">
    <interactant intactId="EBI-2799703">
        <id>O95070</id>
    </interactant>
    <interactant intactId="EBI-1055364">
        <id>Q3ZAQ7</id>
        <label>VMA21</label>
    </interactant>
    <organismsDiffer>false</organismsDiffer>
    <experiments>3</experiments>
</comment>
<comment type="interaction">
    <interactant intactId="EBI-2799703">
        <id>O95070</id>
    </interactant>
    <interactant intactId="EBI-9478589">
        <id>Q96P53</id>
        <label>WDFY2</label>
    </interactant>
    <organismsDiffer>false</organismsDiffer>
    <experiments>3</experiments>
</comment>
<comment type="interaction">
    <interactant intactId="EBI-2799703">
        <id>O95070</id>
    </interactant>
    <interactant intactId="EBI-720609">
        <id>O76024</id>
        <label>WFS1</label>
    </interactant>
    <organismsDiffer>false</organismsDiffer>
    <experiments>3</experiments>
</comment>
<comment type="interaction">
    <interactant intactId="EBI-2799703">
        <id>O95070</id>
    </interactant>
    <interactant intactId="EBI-751253">
        <id>Q9BSR8</id>
        <label>YIPF4</label>
    </interactant>
    <organismsDiffer>false</organismsDiffer>
    <experiments>3</experiments>
</comment>
<comment type="interaction">
    <interactant intactId="EBI-2799703">
        <id>O95070</id>
    </interactant>
    <interactant intactId="EBI-2124787">
        <id>Q969M3</id>
        <label>YIPF5</label>
    </interactant>
    <organismsDiffer>false</organismsDiffer>
    <experiments>9</experiments>
</comment>
<comment type="interaction">
    <interactant intactId="EBI-2799703">
        <id>O95070</id>
    </interactant>
    <interactant intactId="EBI-11572692">
        <id>Q969W1</id>
        <label>ZDHHC16</label>
    </interactant>
    <organismsDiffer>false</organismsDiffer>
    <experiments>3</experiments>
</comment>
<comment type="interaction">
    <interactant intactId="EBI-2799703">
        <id>O95070</id>
    </interactant>
    <interactant intactId="EBI-2849569">
        <id>Q9BQ24</id>
        <label>ZFYVE21</label>
    </interactant>
    <organismsDiffer>false</organismsDiffer>
    <experiments>3</experiments>
</comment>
<comment type="interaction">
    <interactant intactId="EBI-2799703">
        <id>O95070</id>
    </interactant>
    <interactant intactId="EBI-3892947">
        <id>Q5T4F4</id>
        <label>ZFYVE27</label>
    </interactant>
    <organismsDiffer>false</organismsDiffer>
    <experiments>3</experiments>
</comment>
<comment type="subcellular location">
    <subcellularLocation>
        <location evidence="3">Endoplasmic reticulum membrane</location>
        <topology evidence="1">Multi-pass membrane protein</topology>
    </subcellularLocation>
    <subcellularLocation>
        <location evidence="3 4 5">Golgi apparatus membrane</location>
        <topology evidence="1">Multi-pass membrane protein</topology>
    </subcellularLocation>
    <subcellularLocation>
        <location evidence="5">Endoplasmic reticulum-Golgi intermediate compartment membrane</location>
        <topology evidence="1">Multi-pass membrane protein</topology>
    </subcellularLocation>
    <text evidence="3">Cycles between the endoplasmic reticulum and the endoplasmic reticulum-Golgi intermediate compartment.</text>
</comment>
<comment type="similarity">
    <text evidence="6">Belongs to the YIF1 family.</text>
</comment>
<accession>O95070</accession>
<accession>A6NM00</accession>
<accession>Q96G83</accession>
<accession>Q9BVD0</accession>
<dbReference type="EMBL" id="AF004876">
    <property type="protein sequence ID" value="AAD01206.1"/>
    <property type="molecule type" value="mRNA"/>
</dbReference>
<dbReference type="EMBL" id="CR456710">
    <property type="protein sequence ID" value="CAG32991.1"/>
    <property type="molecule type" value="mRNA"/>
</dbReference>
<dbReference type="EMBL" id="AP001107">
    <property type="status" value="NOT_ANNOTATED_CDS"/>
    <property type="molecule type" value="Genomic_DNA"/>
</dbReference>
<dbReference type="EMBL" id="CH471076">
    <property type="protein sequence ID" value="EAW74509.1"/>
    <property type="molecule type" value="Genomic_DNA"/>
</dbReference>
<dbReference type="EMBL" id="BC001299">
    <property type="protein sequence ID" value="AAH01299.1"/>
    <property type="molecule type" value="mRNA"/>
</dbReference>
<dbReference type="EMBL" id="BC009892">
    <property type="protein sequence ID" value="AAH09892.2"/>
    <property type="molecule type" value="mRNA"/>
</dbReference>
<dbReference type="CCDS" id="CCDS8132.1"/>
<dbReference type="RefSeq" id="NP_065203.2">
    <property type="nucleotide sequence ID" value="NM_020470.3"/>
</dbReference>
<dbReference type="BioGRID" id="116103">
    <property type="interactions" value="137"/>
</dbReference>
<dbReference type="FunCoup" id="O95070">
    <property type="interactions" value="2467"/>
</dbReference>
<dbReference type="IntAct" id="O95070">
    <property type="interactions" value="114"/>
</dbReference>
<dbReference type="MINT" id="O95070"/>
<dbReference type="STRING" id="9606.ENSP00000366098"/>
<dbReference type="ChEMBL" id="CHEMBL5465281"/>
<dbReference type="GlyGen" id="O95070">
    <property type="glycosylation" value="1 site, 1 O-linked glycan (1 site)"/>
</dbReference>
<dbReference type="iPTMnet" id="O95070"/>
<dbReference type="PhosphoSitePlus" id="O95070"/>
<dbReference type="BioMuta" id="YIF1A"/>
<dbReference type="jPOST" id="O95070"/>
<dbReference type="MassIVE" id="O95070"/>
<dbReference type="PaxDb" id="9606-ENSP00000366098"/>
<dbReference type="PeptideAtlas" id="O95070"/>
<dbReference type="ProteomicsDB" id="50640"/>
<dbReference type="Pumba" id="O95070"/>
<dbReference type="TopDownProteomics" id="O95070"/>
<dbReference type="Antibodypedia" id="3107">
    <property type="antibodies" value="42 antibodies from 13 providers"/>
</dbReference>
<dbReference type="DNASU" id="10897"/>
<dbReference type="Ensembl" id="ENST00000376901.9">
    <property type="protein sequence ID" value="ENSP00000366098.4"/>
    <property type="gene ID" value="ENSG00000174851.17"/>
</dbReference>
<dbReference type="Ensembl" id="ENST00000715691.1">
    <property type="protein sequence ID" value="ENSP00000520502.1"/>
    <property type="gene ID" value="ENSG00000174851.17"/>
</dbReference>
<dbReference type="GeneID" id="10897"/>
<dbReference type="KEGG" id="hsa:10897"/>
<dbReference type="MANE-Select" id="ENST00000376901.9">
    <property type="protein sequence ID" value="ENSP00000366098.4"/>
    <property type="RefSeq nucleotide sequence ID" value="NM_020470.3"/>
    <property type="RefSeq protein sequence ID" value="NP_065203.2"/>
</dbReference>
<dbReference type="UCSC" id="uc001ohk.5">
    <property type="organism name" value="human"/>
</dbReference>
<dbReference type="AGR" id="HGNC:16688"/>
<dbReference type="CTD" id="10897"/>
<dbReference type="DisGeNET" id="10897"/>
<dbReference type="GeneCards" id="YIF1A"/>
<dbReference type="HGNC" id="HGNC:16688">
    <property type="gene designation" value="YIF1A"/>
</dbReference>
<dbReference type="HPA" id="ENSG00000174851">
    <property type="expression patterns" value="Low tissue specificity"/>
</dbReference>
<dbReference type="MIM" id="611484">
    <property type="type" value="gene"/>
</dbReference>
<dbReference type="neXtProt" id="NX_O95070"/>
<dbReference type="OpenTargets" id="ENSG00000174851"/>
<dbReference type="PharmGKB" id="PA134985105"/>
<dbReference type="VEuPathDB" id="HostDB:ENSG00000174851"/>
<dbReference type="eggNOG" id="KOG3094">
    <property type="taxonomic scope" value="Eukaryota"/>
</dbReference>
<dbReference type="GeneTree" id="ENSGT00390000009423"/>
<dbReference type="InParanoid" id="O95070"/>
<dbReference type="OMA" id="NWEVRYS"/>
<dbReference type="OrthoDB" id="337750at2759"/>
<dbReference type="PAN-GO" id="O95070">
    <property type="GO annotations" value="5 GO annotations based on evolutionary models"/>
</dbReference>
<dbReference type="PhylomeDB" id="O95070"/>
<dbReference type="TreeFam" id="TF314528"/>
<dbReference type="PathwayCommons" id="O95070"/>
<dbReference type="Reactome" id="R-HSA-381038">
    <property type="pathway name" value="XBP1(S) activates chaperone genes"/>
</dbReference>
<dbReference type="SignaLink" id="O95070"/>
<dbReference type="BioGRID-ORCS" id="10897">
    <property type="hits" value="22 hits in 1166 CRISPR screens"/>
</dbReference>
<dbReference type="GeneWiki" id="YIF1A"/>
<dbReference type="GenomeRNAi" id="10897"/>
<dbReference type="Pharos" id="O95070">
    <property type="development level" value="Tdark"/>
</dbReference>
<dbReference type="PRO" id="PR:O95070"/>
<dbReference type="Proteomes" id="UP000005640">
    <property type="component" value="Chromosome 11"/>
</dbReference>
<dbReference type="RNAct" id="O95070">
    <property type="molecule type" value="protein"/>
</dbReference>
<dbReference type="Bgee" id="ENSG00000174851">
    <property type="expression patterns" value="Expressed in stromal cell of endometrium and 174 other cell types or tissues"/>
</dbReference>
<dbReference type="ExpressionAtlas" id="O95070">
    <property type="expression patterns" value="baseline and differential"/>
</dbReference>
<dbReference type="GO" id="GO:0030134">
    <property type="term" value="C:COPII-coated ER to Golgi transport vesicle"/>
    <property type="evidence" value="ECO:0000318"/>
    <property type="project" value="GO_Central"/>
</dbReference>
<dbReference type="GO" id="GO:0005789">
    <property type="term" value="C:endoplasmic reticulum membrane"/>
    <property type="evidence" value="ECO:0000318"/>
    <property type="project" value="GO_Central"/>
</dbReference>
<dbReference type="GO" id="GO:0005793">
    <property type="term" value="C:endoplasmic reticulum-Golgi intermediate compartment"/>
    <property type="evidence" value="ECO:0000314"/>
    <property type="project" value="UniProtKB"/>
</dbReference>
<dbReference type="GO" id="GO:0033116">
    <property type="term" value="C:endoplasmic reticulum-Golgi intermediate compartment membrane"/>
    <property type="evidence" value="ECO:0007669"/>
    <property type="project" value="UniProtKB-SubCell"/>
</dbReference>
<dbReference type="GO" id="GO:0005794">
    <property type="term" value="C:Golgi apparatus"/>
    <property type="evidence" value="ECO:0000314"/>
    <property type="project" value="HPA"/>
</dbReference>
<dbReference type="GO" id="GO:0000139">
    <property type="term" value="C:Golgi membrane"/>
    <property type="evidence" value="ECO:0000318"/>
    <property type="project" value="GO_Central"/>
</dbReference>
<dbReference type="GO" id="GO:0043231">
    <property type="term" value="C:intracellular membrane-bounded organelle"/>
    <property type="evidence" value="ECO:0000314"/>
    <property type="project" value="HPA"/>
</dbReference>
<dbReference type="GO" id="GO:0006888">
    <property type="term" value="P:endoplasmic reticulum to Golgi vesicle-mediated transport"/>
    <property type="evidence" value="ECO:0000318"/>
    <property type="project" value="GO_Central"/>
</dbReference>
<dbReference type="GO" id="GO:0015031">
    <property type="term" value="P:protein transport"/>
    <property type="evidence" value="ECO:0007669"/>
    <property type="project" value="UniProtKB-KW"/>
</dbReference>
<dbReference type="InterPro" id="IPR005578">
    <property type="entry name" value="Yif1_fam"/>
</dbReference>
<dbReference type="PANTHER" id="PTHR14083:SF2">
    <property type="entry name" value="PROTEIN YIF1A"/>
    <property type="match status" value="1"/>
</dbReference>
<dbReference type="PANTHER" id="PTHR14083">
    <property type="entry name" value="YIP1 INTERACTING FACTOR HOMOLOG YIF1 PROTEIN"/>
    <property type="match status" value="1"/>
</dbReference>
<dbReference type="Pfam" id="PF03878">
    <property type="entry name" value="YIF1"/>
    <property type="match status" value="1"/>
</dbReference>
<proteinExistence type="evidence at protein level"/>
<feature type="initiator methionine" description="Removed" evidence="7">
    <location>
        <position position="1"/>
    </location>
</feature>
<feature type="chain" id="PRO_0000233275" description="Protein YIF1A">
    <location>
        <begin position="2"/>
        <end position="293"/>
    </location>
</feature>
<feature type="topological domain" description="Cytoplasmic" evidence="1">
    <location>
        <begin position="2"/>
        <end position="138"/>
    </location>
</feature>
<feature type="transmembrane region" description="Helical" evidence="1">
    <location>
        <begin position="139"/>
        <end position="159"/>
    </location>
</feature>
<feature type="topological domain" description="Lumenal" evidence="6">
    <location>
        <begin position="160"/>
        <end position="174"/>
    </location>
</feature>
<feature type="transmembrane region" description="Helical" evidence="1">
    <location>
        <begin position="175"/>
        <end position="195"/>
    </location>
</feature>
<feature type="topological domain" description="Cytoplasmic" evidence="6">
    <location>
        <begin position="196"/>
        <end position="203"/>
    </location>
</feature>
<feature type="transmembrane region" description="Helical" evidence="1">
    <location>
        <begin position="204"/>
        <end position="226"/>
    </location>
</feature>
<feature type="topological domain" description="Lumenal" evidence="6">
    <location>
        <begin position="227"/>
        <end position="229"/>
    </location>
</feature>
<feature type="transmembrane region" description="Helical" evidence="1">
    <location>
        <begin position="230"/>
        <end position="249"/>
    </location>
</feature>
<feature type="topological domain" description="Cytoplasmic" evidence="6">
    <location>
        <begin position="250"/>
        <end position="271"/>
    </location>
</feature>
<feature type="transmembrane region" description="Helical" evidence="1">
    <location>
        <begin position="272"/>
        <end position="292"/>
    </location>
</feature>
<feature type="region of interest" description="Disordered" evidence="2">
    <location>
        <begin position="1"/>
        <end position="33"/>
    </location>
</feature>
<feature type="modified residue" description="N-acetylalanine" evidence="7">
    <location>
        <position position="2"/>
    </location>
</feature>
<feature type="modified residue" description="Phosphoserine" evidence="7 8">
    <location>
        <position position="12"/>
    </location>
</feature>
<feature type="sequence conflict" description="In Ref. 2; CAG32991 and 4; AAH01299/AAH09892." evidence="6" ref="2 4">
    <original>M</original>
    <variation>K</variation>
    <location>
        <position position="144"/>
    </location>
</feature>
<evidence type="ECO:0000255" key="1"/>
<evidence type="ECO:0000256" key="2">
    <source>
        <dbReference type="SAM" id="MobiDB-lite"/>
    </source>
</evidence>
<evidence type="ECO:0000269" key="3">
    <source>
    </source>
</evidence>
<evidence type="ECO:0000269" key="4">
    <source>
    </source>
</evidence>
<evidence type="ECO:0000269" key="5">
    <source>
    </source>
</evidence>
<evidence type="ECO:0000305" key="6"/>
<evidence type="ECO:0007744" key="7">
    <source>
    </source>
</evidence>
<evidence type="ECO:0007744" key="8">
    <source>
    </source>
</evidence>
<protein>
    <recommendedName>
        <fullName>Protein YIF1A</fullName>
    </recommendedName>
    <alternativeName>
        <fullName>54TMp</fullName>
    </alternativeName>
    <alternativeName>
        <fullName>YIP1-interacting factor homolog A</fullName>
    </alternativeName>
</protein>
<organism>
    <name type="scientific">Homo sapiens</name>
    <name type="common">Human</name>
    <dbReference type="NCBI Taxonomy" id="9606"/>
    <lineage>
        <taxon>Eukaryota</taxon>
        <taxon>Metazoa</taxon>
        <taxon>Chordata</taxon>
        <taxon>Craniata</taxon>
        <taxon>Vertebrata</taxon>
        <taxon>Euteleostomi</taxon>
        <taxon>Mammalia</taxon>
        <taxon>Eutheria</taxon>
        <taxon>Euarchontoglires</taxon>
        <taxon>Primates</taxon>
        <taxon>Haplorrhini</taxon>
        <taxon>Catarrhini</taxon>
        <taxon>Hominidae</taxon>
        <taxon>Homo</taxon>
    </lineage>
</organism>
<name>YIF1A_HUMAN</name>
<gene>
    <name type="primary">YIF1A</name>
    <name type="synonym">54TM</name>
    <name type="synonym">HYIF1P</name>
    <name type="synonym">YIF1</name>
</gene>
<reference key="1">
    <citation type="submission" date="1997-05" db="EMBL/GenBank/DDBJ databases">
        <authorList>
            <person name="Wilson L.A."/>
            <person name="Field D."/>
            <person name="Cruz L."/>
            <person name="Friesen J."/>
            <person name="Siminovitch K.A."/>
        </authorList>
    </citation>
    <scope>NUCLEOTIDE SEQUENCE [MRNA]</scope>
    <source>
        <tissue>T-cell</tissue>
    </source>
</reference>
<reference key="2">
    <citation type="submission" date="2004-06" db="EMBL/GenBank/DDBJ databases">
        <title>Cloning of human full open reading frames in Gateway(TM) system entry vector (pDONR201).</title>
        <authorList>
            <person name="Ebert L."/>
            <person name="Schick M."/>
            <person name="Neubert P."/>
            <person name="Schatten R."/>
            <person name="Henze S."/>
            <person name="Korn B."/>
        </authorList>
    </citation>
    <scope>NUCLEOTIDE SEQUENCE [LARGE SCALE MRNA]</scope>
</reference>
<reference key="3">
    <citation type="journal article" date="2006" name="Nature">
        <title>Human chromosome 11 DNA sequence and analysis including novel gene identification.</title>
        <authorList>
            <person name="Taylor T.D."/>
            <person name="Noguchi H."/>
            <person name="Totoki Y."/>
            <person name="Toyoda A."/>
            <person name="Kuroki Y."/>
            <person name="Dewar K."/>
            <person name="Lloyd C."/>
            <person name="Itoh T."/>
            <person name="Takeda T."/>
            <person name="Kim D.-W."/>
            <person name="She X."/>
            <person name="Barlow K.F."/>
            <person name="Bloom T."/>
            <person name="Bruford E."/>
            <person name="Chang J.L."/>
            <person name="Cuomo C.A."/>
            <person name="Eichler E."/>
            <person name="FitzGerald M.G."/>
            <person name="Jaffe D.B."/>
            <person name="LaButti K."/>
            <person name="Nicol R."/>
            <person name="Park H.-S."/>
            <person name="Seaman C."/>
            <person name="Sougnez C."/>
            <person name="Yang X."/>
            <person name="Zimmer A.R."/>
            <person name="Zody M.C."/>
            <person name="Birren B.W."/>
            <person name="Nusbaum C."/>
            <person name="Fujiyama A."/>
            <person name="Hattori M."/>
            <person name="Rogers J."/>
            <person name="Lander E.S."/>
            <person name="Sakaki Y."/>
        </authorList>
    </citation>
    <scope>NUCLEOTIDE SEQUENCE [LARGE SCALE GENOMIC DNA]</scope>
</reference>
<reference key="4">
    <citation type="submission" date="2005-07" db="EMBL/GenBank/DDBJ databases">
        <authorList>
            <person name="Mural R.J."/>
            <person name="Istrail S."/>
            <person name="Sutton G.G."/>
            <person name="Florea L."/>
            <person name="Halpern A.L."/>
            <person name="Mobarry C.M."/>
            <person name="Lippert R."/>
            <person name="Walenz B."/>
            <person name="Shatkay H."/>
            <person name="Dew I."/>
            <person name="Miller J.R."/>
            <person name="Flanigan M.J."/>
            <person name="Edwards N.J."/>
            <person name="Bolanos R."/>
            <person name="Fasulo D."/>
            <person name="Halldorsson B.V."/>
            <person name="Hannenhalli S."/>
            <person name="Turner R."/>
            <person name="Yooseph S."/>
            <person name="Lu F."/>
            <person name="Nusskern D.R."/>
            <person name="Shue B.C."/>
            <person name="Zheng X.H."/>
            <person name="Zhong F."/>
            <person name="Delcher A.L."/>
            <person name="Huson D.H."/>
            <person name="Kravitz S.A."/>
            <person name="Mouchard L."/>
            <person name="Reinert K."/>
            <person name="Remington K.A."/>
            <person name="Clark A.G."/>
            <person name="Waterman M.S."/>
            <person name="Eichler E.E."/>
            <person name="Adams M.D."/>
            <person name="Hunkapiller M.W."/>
            <person name="Myers E.W."/>
            <person name="Venter J.C."/>
        </authorList>
    </citation>
    <scope>NUCLEOTIDE SEQUENCE [LARGE SCALE GENOMIC DNA]</scope>
</reference>
<reference key="5">
    <citation type="journal article" date="2004" name="Genome Res.">
        <title>The status, quality, and expansion of the NIH full-length cDNA project: the Mammalian Gene Collection (MGC).</title>
        <authorList>
            <consortium name="The MGC Project Team"/>
        </authorList>
    </citation>
    <scope>NUCLEOTIDE SEQUENCE [LARGE SCALE MRNA]</scope>
    <source>
        <tissue>Brain</tissue>
        <tissue>Placenta</tissue>
    </source>
</reference>
<reference key="6">
    <citation type="journal article" date="2004" name="J. Biol. Chem.">
        <title>Proteomics of endoplasmic reticulum-Golgi intermediate compartment (ERGIC) membranes from brefeldin A-treated HepG2 cells identifies ERGIC-32, a new cycling protein that interacts with human Erv46.</title>
        <authorList>
            <person name="Breuza L."/>
            <person name="Halbeisen R."/>
            <person name="Jenoe P."/>
            <person name="Otte S."/>
            <person name="Barlowe C."/>
            <person name="Hong W."/>
            <person name="Hauri H.-P."/>
        </authorList>
    </citation>
    <scope>SUBCELLULAR LOCATION</scope>
</reference>
<reference key="7">
    <citation type="journal article" date="2005" name="Biochem. Biophys. Res. Commun.">
        <title>Human Yip1A specifies the localization of Yif1 to the Golgi apparatus.</title>
        <authorList>
            <person name="Jin C."/>
            <person name="Zhang Y."/>
            <person name="Zhu H."/>
            <person name="Ahmed K."/>
            <person name="Fu C."/>
            <person name="Yao X."/>
        </authorList>
    </citation>
    <scope>FUNCTION</scope>
    <scope>INTERACTION WITH YIPF5</scope>
    <scope>SUBCELLULAR LOCATION</scope>
</reference>
<reference key="8">
    <citation type="journal article" date="2011" name="BMC Syst. Biol.">
        <title>Initial characterization of the human central proteome.</title>
        <authorList>
            <person name="Burkard T.R."/>
            <person name="Planyavsky M."/>
            <person name="Kaupe I."/>
            <person name="Breitwieser F.P."/>
            <person name="Buerckstuemmer T."/>
            <person name="Bennett K.L."/>
            <person name="Superti-Furga G."/>
            <person name="Colinge J."/>
        </authorList>
    </citation>
    <scope>IDENTIFICATION BY MASS SPECTROMETRY [LARGE SCALE ANALYSIS]</scope>
</reference>
<reference key="9">
    <citation type="journal article" date="2011" name="Sci. Signal.">
        <title>System-wide temporal characterization of the proteome and phosphoproteome of human embryonic stem cell differentiation.</title>
        <authorList>
            <person name="Rigbolt K.T."/>
            <person name="Prokhorova T.A."/>
            <person name="Akimov V."/>
            <person name="Henningsen J."/>
            <person name="Johansen P.T."/>
            <person name="Kratchmarova I."/>
            <person name="Kassem M."/>
            <person name="Mann M."/>
            <person name="Olsen J.V."/>
            <person name="Blagoev B."/>
        </authorList>
    </citation>
    <scope>ACETYLATION [LARGE SCALE ANALYSIS] AT ALA-2</scope>
    <scope>PHOSPHORYLATION [LARGE SCALE ANALYSIS] AT SER-12</scope>
    <scope>CLEAVAGE OF INITIATOR METHIONINE [LARGE SCALE ANALYSIS]</scope>
    <scope>IDENTIFICATION BY MASS SPECTROMETRY [LARGE SCALE ANALYSIS]</scope>
</reference>
<reference key="10">
    <citation type="journal article" date="2013" name="J. Proteome Res.">
        <title>Toward a comprehensive characterization of a human cancer cell phosphoproteome.</title>
        <authorList>
            <person name="Zhou H."/>
            <person name="Di Palma S."/>
            <person name="Preisinger C."/>
            <person name="Peng M."/>
            <person name="Polat A.N."/>
            <person name="Heck A.J."/>
            <person name="Mohammed S."/>
        </authorList>
    </citation>
    <scope>PHOSPHORYLATION [LARGE SCALE ANALYSIS] AT SER-12</scope>
    <scope>IDENTIFICATION BY MASS SPECTROMETRY [LARGE SCALE ANALYSIS]</scope>
    <source>
        <tissue>Cervix carcinoma</tissue>
        <tissue>Erythroleukemia</tissue>
    </source>
</reference>
<reference key="11">
    <citation type="journal article" date="2015" name="Traffic">
        <title>Yif1B Is Involved in the Anterograde Traffic Pathway and the Golgi Architecture.</title>
        <authorList>
            <person name="Alterio J."/>
            <person name="Masson J."/>
            <person name="Diaz J."/>
            <person name="Chachlaki K."/>
            <person name="Salman H."/>
            <person name="Areias J."/>
            <person name="Al Awabdh S."/>
            <person name="Emerit M.B."/>
            <person name="Darmon M."/>
        </authorList>
    </citation>
    <scope>SUBCELLULAR LOCATION</scope>
</reference>
<keyword id="KW-0007">Acetylation</keyword>
<keyword id="KW-0256">Endoplasmic reticulum</keyword>
<keyword id="KW-0931">ER-Golgi transport</keyword>
<keyword id="KW-0333">Golgi apparatus</keyword>
<keyword id="KW-0472">Membrane</keyword>
<keyword id="KW-0597">Phosphoprotein</keyword>
<keyword id="KW-0653">Protein transport</keyword>
<keyword id="KW-1267">Proteomics identification</keyword>
<keyword id="KW-1185">Reference proteome</keyword>
<keyword id="KW-0812">Transmembrane</keyword>
<keyword id="KW-1133">Transmembrane helix</keyword>
<keyword id="KW-0813">Transport</keyword>
<sequence length="293" mass="32011">MAYHSGYGAHGSKHRARAAPDPPPLFDDTSGGYSSQPGGYPATGADVAFSVNHLLGDPMANVAMAYGSSIASHGKDMVHKELHRFVSVSKLKYFFAVDTAYVAKKLGLLVFPYTHQNWEVQYSRDAPLPPRQDLNAPDLYIPTMAFITYVLLAGMALGIQKRFSPEVLGLCASTALVWVVMEVLALLLGLYLATVRSDLSTFHLLAYSGYKYVGMILSVLTGLLFGSDGYYVALAWTSSALMYFIVRSLRTAALGPDSMGGPVPRQRLQLYLTLGAAAFQPLIIYWLTFHLVR</sequence>